<gene>
    <name type="primary">Psmd5</name>
    <name type="synonym">Kiaa0072</name>
</gene>
<feature type="initiator methionine" description="Removed" evidence="2">
    <location>
        <position position="1"/>
    </location>
</feature>
<feature type="chain" id="PRO_0000173837" description="26S proteasome non-ATPase regulatory subunit 5">
    <location>
        <begin position="2"/>
        <end position="504"/>
    </location>
</feature>
<feature type="modified residue" description="N-acetylalanine" evidence="2">
    <location>
        <position position="2"/>
    </location>
</feature>
<feature type="sequence conflict" description="In Ref. 1; BAC37265." evidence="4" ref="1">
    <original>G</original>
    <variation>V</variation>
    <location>
        <position position="158"/>
    </location>
</feature>
<feature type="sequence conflict" description="In Ref. 4; BC019112." evidence="4" ref="4">
    <original>L</original>
    <variation>P</variation>
    <location>
        <position position="398"/>
    </location>
</feature>
<feature type="sequence conflict" description="In Ref. 5; BAD90393." evidence="4" ref="5">
    <original>H</original>
    <variation>L</variation>
    <location>
        <position position="448"/>
    </location>
</feature>
<dbReference type="EMBL" id="AK032992">
    <property type="protein sequence ID" value="BAC28117.1"/>
    <property type="molecule type" value="mRNA"/>
</dbReference>
<dbReference type="EMBL" id="AK078419">
    <property type="protein sequence ID" value="BAC37265.1"/>
    <property type="molecule type" value="mRNA"/>
</dbReference>
<dbReference type="EMBL" id="AK145587">
    <property type="protein sequence ID" value="BAE26526.1"/>
    <property type="molecule type" value="mRNA"/>
</dbReference>
<dbReference type="EMBL" id="AK148284">
    <property type="protein sequence ID" value="BAE28457.1"/>
    <property type="molecule type" value="mRNA"/>
</dbReference>
<dbReference type="EMBL" id="AL929068">
    <property type="status" value="NOT_ANNOTATED_CDS"/>
    <property type="molecule type" value="Genomic_DNA"/>
</dbReference>
<dbReference type="EMBL" id="CH466542">
    <property type="protein sequence ID" value="EDL08630.1"/>
    <property type="molecule type" value="Genomic_DNA"/>
</dbReference>
<dbReference type="EMBL" id="BC019112">
    <property type="status" value="NOT_ANNOTATED_CDS"/>
    <property type="molecule type" value="mRNA"/>
</dbReference>
<dbReference type="EMBL" id="AK220321">
    <property type="protein sequence ID" value="BAD90393.1"/>
    <property type="molecule type" value="mRNA"/>
</dbReference>
<dbReference type="CCDS" id="CCDS15953.1"/>
<dbReference type="RefSeq" id="NP_542121.2">
    <property type="nucleotide sequence ID" value="NM_080554.2"/>
</dbReference>
<dbReference type="SMR" id="Q8BJY1"/>
<dbReference type="BioGRID" id="211865">
    <property type="interactions" value="44"/>
</dbReference>
<dbReference type="FunCoup" id="Q8BJY1">
    <property type="interactions" value="1889"/>
</dbReference>
<dbReference type="IntAct" id="Q8BJY1">
    <property type="interactions" value="2"/>
</dbReference>
<dbReference type="STRING" id="10090.ENSMUSP00000028225"/>
<dbReference type="iPTMnet" id="Q8BJY1"/>
<dbReference type="PhosphoSitePlus" id="Q8BJY1"/>
<dbReference type="SwissPalm" id="Q8BJY1"/>
<dbReference type="jPOST" id="Q8BJY1"/>
<dbReference type="PaxDb" id="10090-ENSMUSP00000028225"/>
<dbReference type="PeptideAtlas" id="Q8BJY1"/>
<dbReference type="ProteomicsDB" id="291703"/>
<dbReference type="Pumba" id="Q8BJY1"/>
<dbReference type="Antibodypedia" id="757">
    <property type="antibodies" value="230 antibodies from 28 providers"/>
</dbReference>
<dbReference type="DNASU" id="66998"/>
<dbReference type="Ensembl" id="ENSMUST00000028225.12">
    <property type="protein sequence ID" value="ENSMUSP00000028225.6"/>
    <property type="gene ID" value="ENSMUSG00000026869.13"/>
</dbReference>
<dbReference type="GeneID" id="66998"/>
<dbReference type="KEGG" id="mmu:66998"/>
<dbReference type="UCSC" id="uc008jje.1">
    <property type="organism name" value="mouse"/>
</dbReference>
<dbReference type="AGR" id="MGI:1914248"/>
<dbReference type="CTD" id="5711"/>
<dbReference type="MGI" id="MGI:1914248">
    <property type="gene designation" value="Psmd5"/>
</dbReference>
<dbReference type="VEuPathDB" id="HostDB:ENSMUSG00000026869"/>
<dbReference type="eggNOG" id="KOG4413">
    <property type="taxonomic scope" value="Eukaryota"/>
</dbReference>
<dbReference type="GeneTree" id="ENSGT00390000013040"/>
<dbReference type="HOGENOM" id="CLU_043710_0_0_1"/>
<dbReference type="InParanoid" id="Q8BJY1"/>
<dbReference type="OMA" id="WGQEYIS"/>
<dbReference type="OrthoDB" id="10250600at2759"/>
<dbReference type="PhylomeDB" id="Q8BJY1"/>
<dbReference type="TreeFam" id="TF106231"/>
<dbReference type="Reactome" id="R-MMU-9907900">
    <property type="pathway name" value="Proteasome assembly"/>
</dbReference>
<dbReference type="BioGRID-ORCS" id="66998">
    <property type="hits" value="1 hit in 78 CRISPR screens"/>
</dbReference>
<dbReference type="ChiTaRS" id="Psmd5">
    <property type="organism name" value="mouse"/>
</dbReference>
<dbReference type="PRO" id="PR:Q8BJY1"/>
<dbReference type="Proteomes" id="UP000000589">
    <property type="component" value="Chromosome 2"/>
</dbReference>
<dbReference type="RNAct" id="Q8BJY1">
    <property type="molecule type" value="protein"/>
</dbReference>
<dbReference type="Bgee" id="ENSMUSG00000026869">
    <property type="expression patterns" value="Expressed in fetal liver hematopoietic progenitor cell and 271 other cell types or tissues"/>
</dbReference>
<dbReference type="ExpressionAtlas" id="Q8BJY1">
    <property type="expression patterns" value="baseline and differential"/>
</dbReference>
<dbReference type="GO" id="GO:0022624">
    <property type="term" value="C:proteasome accessory complex"/>
    <property type="evidence" value="ECO:0000314"/>
    <property type="project" value="UniProtKB"/>
</dbReference>
<dbReference type="GO" id="GO:0008540">
    <property type="term" value="C:proteasome regulatory particle, base subcomplex"/>
    <property type="evidence" value="ECO:0007669"/>
    <property type="project" value="Ensembl"/>
</dbReference>
<dbReference type="GO" id="GO:0070682">
    <property type="term" value="P:proteasome regulatory particle assembly"/>
    <property type="evidence" value="ECO:0007669"/>
    <property type="project" value="Ensembl"/>
</dbReference>
<dbReference type="FunFam" id="1.25.10.10:FF:000208">
    <property type="entry name" value="26S proteasome non-ATPase regulatory subunit 5"/>
    <property type="match status" value="1"/>
</dbReference>
<dbReference type="Gene3D" id="1.25.10.10">
    <property type="entry name" value="Leucine-rich Repeat Variant"/>
    <property type="match status" value="2"/>
</dbReference>
<dbReference type="InterPro" id="IPR011989">
    <property type="entry name" value="ARM-like"/>
</dbReference>
<dbReference type="InterPro" id="IPR016024">
    <property type="entry name" value="ARM-type_fold"/>
</dbReference>
<dbReference type="InterPro" id="IPR019538">
    <property type="entry name" value="PSMD5"/>
</dbReference>
<dbReference type="PANTHER" id="PTHR13554:SF10">
    <property type="entry name" value="26S PROTEASOME NON-ATPASE REGULATORY SUBUNIT 5"/>
    <property type="match status" value="1"/>
</dbReference>
<dbReference type="PANTHER" id="PTHR13554">
    <property type="entry name" value="26S PROTEASOME NON-ATPASE REGULATORY SUBUNIT 5-RELATED"/>
    <property type="match status" value="1"/>
</dbReference>
<dbReference type="Pfam" id="PF10508">
    <property type="entry name" value="Proteasom_PSMB"/>
    <property type="match status" value="1"/>
</dbReference>
<dbReference type="SUPFAM" id="SSF48371">
    <property type="entry name" value="ARM repeat"/>
    <property type="match status" value="1"/>
</dbReference>
<protein>
    <recommendedName>
        <fullName>26S proteasome non-ATPase regulatory subunit 5</fullName>
    </recommendedName>
    <alternativeName>
        <fullName>26S protease subunit S5 basic</fullName>
    </alternativeName>
    <alternativeName>
        <fullName>26S proteasome subunit S5B</fullName>
    </alternativeName>
</protein>
<evidence type="ECO:0000250" key="1"/>
<evidence type="ECO:0000250" key="2">
    <source>
        <dbReference type="UniProtKB" id="Q16401"/>
    </source>
</evidence>
<evidence type="ECO:0000269" key="3">
    <source>
    </source>
</evidence>
<evidence type="ECO:0000305" key="4"/>
<accession>Q8BJY1</accession>
<accession>A2AUB0</accession>
<accession>Q3UFV2</accession>
<accession>Q5DU49</accession>
<accession>Q8BMA9</accession>
<accession>Q8VEE9</accession>
<comment type="function">
    <text evidence="1">Acts as a chaperone during the assembly of the 26S proteasome, specifically of the base subcomplex of the PA700/19S regulatory complex (RC). In the initial step of the base subcomplex assembly is part of an intermediate PSMD5:PSMC2:PSMC1:PSMD2 module which probably assembles with a PSMD10:PSMC4:PSMC5:PAAF1 module followed by dissociation of PSMD5 (By similarity).</text>
</comment>
<comment type="subunit">
    <text evidence="3">Interacts with PSMC1, PSMC2, PSMD1 and PSMD6. Part of transient complex containing PSMD5, PSMC2, PSMC1 and PSMD2 formed during the assembly of the 26S proteasome.</text>
</comment>
<comment type="domain">
    <text>Rich in dileucine repeats, which have been implicated in trafficking of a variety of transmembrane proteins.</text>
</comment>
<comment type="similarity">
    <text evidence="4">Belongs to the proteasome subunit S5B/HSM3 family.</text>
</comment>
<keyword id="KW-0007">Acetylation</keyword>
<keyword id="KW-0143">Chaperone</keyword>
<keyword id="KW-1185">Reference proteome</keyword>
<name>PSMD5_MOUSE</name>
<proteinExistence type="evidence at protein level"/>
<organism>
    <name type="scientific">Mus musculus</name>
    <name type="common">Mouse</name>
    <dbReference type="NCBI Taxonomy" id="10090"/>
    <lineage>
        <taxon>Eukaryota</taxon>
        <taxon>Metazoa</taxon>
        <taxon>Chordata</taxon>
        <taxon>Craniata</taxon>
        <taxon>Vertebrata</taxon>
        <taxon>Euteleostomi</taxon>
        <taxon>Mammalia</taxon>
        <taxon>Eutheria</taxon>
        <taxon>Euarchontoglires</taxon>
        <taxon>Glires</taxon>
        <taxon>Rodentia</taxon>
        <taxon>Myomorpha</taxon>
        <taxon>Muroidea</taxon>
        <taxon>Muridae</taxon>
        <taxon>Murinae</taxon>
        <taxon>Mus</taxon>
        <taxon>Mus</taxon>
    </lineage>
</organism>
<sequence>MAAQAVSLLREVARLEAPLEELRALQSVVQAVPLHELREQAAELRLRPLFSLLNQNNREQTALCVSILERLLQAVEPIHLARNLRLDLQRGLTHPDDSVKTLTLSQIGRIVENSEAVTEILNNAELLKQIVYCIGGENLSVAKAAIKSLSRISLTQAGLEALFESNLLDDLKNVMKTNDVVRYRVYELIIDISSVSSESLNYCTTSGLVTQLLKELTGEDVLVRATCIEMVTSLAYTHHGRQYLAQEGVIDQISNIIVGADSDPFSGFYLPGFVKFFGNLAVMDSPQQICERYPVFLEKVFEMADSQDPTMIGVAVDTVGILGSSVEGKQVLQKTGTRFERVLMRVGYQAKNASTELKIRCLDAVSSLLYLSPEQQTDDFLGMTESWFSSMSRDSLELFRGISNQPFPELHCAALKVFTAIADQPWAQRLMFNSPGFVEFVMDRSVEHDKASKDAKYELVKALANSKTVAEIFGNSNYLRLRAYLSEGPYYVKPVATTAVEGAD</sequence>
<reference key="1">
    <citation type="journal article" date="2005" name="Science">
        <title>The transcriptional landscape of the mammalian genome.</title>
        <authorList>
            <person name="Carninci P."/>
            <person name="Kasukawa T."/>
            <person name="Katayama S."/>
            <person name="Gough J."/>
            <person name="Frith M.C."/>
            <person name="Maeda N."/>
            <person name="Oyama R."/>
            <person name="Ravasi T."/>
            <person name="Lenhard B."/>
            <person name="Wells C."/>
            <person name="Kodzius R."/>
            <person name="Shimokawa K."/>
            <person name="Bajic V.B."/>
            <person name="Brenner S.E."/>
            <person name="Batalov S."/>
            <person name="Forrest A.R."/>
            <person name="Zavolan M."/>
            <person name="Davis M.J."/>
            <person name="Wilming L.G."/>
            <person name="Aidinis V."/>
            <person name="Allen J.E."/>
            <person name="Ambesi-Impiombato A."/>
            <person name="Apweiler R."/>
            <person name="Aturaliya R.N."/>
            <person name="Bailey T.L."/>
            <person name="Bansal M."/>
            <person name="Baxter L."/>
            <person name="Beisel K.W."/>
            <person name="Bersano T."/>
            <person name="Bono H."/>
            <person name="Chalk A.M."/>
            <person name="Chiu K.P."/>
            <person name="Choudhary V."/>
            <person name="Christoffels A."/>
            <person name="Clutterbuck D.R."/>
            <person name="Crowe M.L."/>
            <person name="Dalla E."/>
            <person name="Dalrymple B.P."/>
            <person name="de Bono B."/>
            <person name="Della Gatta G."/>
            <person name="di Bernardo D."/>
            <person name="Down T."/>
            <person name="Engstrom P."/>
            <person name="Fagiolini M."/>
            <person name="Faulkner G."/>
            <person name="Fletcher C.F."/>
            <person name="Fukushima T."/>
            <person name="Furuno M."/>
            <person name="Futaki S."/>
            <person name="Gariboldi M."/>
            <person name="Georgii-Hemming P."/>
            <person name="Gingeras T.R."/>
            <person name="Gojobori T."/>
            <person name="Green R.E."/>
            <person name="Gustincich S."/>
            <person name="Harbers M."/>
            <person name="Hayashi Y."/>
            <person name="Hensch T.K."/>
            <person name="Hirokawa N."/>
            <person name="Hill D."/>
            <person name="Huminiecki L."/>
            <person name="Iacono M."/>
            <person name="Ikeo K."/>
            <person name="Iwama A."/>
            <person name="Ishikawa T."/>
            <person name="Jakt M."/>
            <person name="Kanapin A."/>
            <person name="Katoh M."/>
            <person name="Kawasawa Y."/>
            <person name="Kelso J."/>
            <person name="Kitamura H."/>
            <person name="Kitano H."/>
            <person name="Kollias G."/>
            <person name="Krishnan S.P."/>
            <person name="Kruger A."/>
            <person name="Kummerfeld S.K."/>
            <person name="Kurochkin I.V."/>
            <person name="Lareau L.F."/>
            <person name="Lazarevic D."/>
            <person name="Lipovich L."/>
            <person name="Liu J."/>
            <person name="Liuni S."/>
            <person name="McWilliam S."/>
            <person name="Madan Babu M."/>
            <person name="Madera M."/>
            <person name="Marchionni L."/>
            <person name="Matsuda H."/>
            <person name="Matsuzawa S."/>
            <person name="Miki H."/>
            <person name="Mignone F."/>
            <person name="Miyake S."/>
            <person name="Morris K."/>
            <person name="Mottagui-Tabar S."/>
            <person name="Mulder N."/>
            <person name="Nakano N."/>
            <person name="Nakauchi H."/>
            <person name="Ng P."/>
            <person name="Nilsson R."/>
            <person name="Nishiguchi S."/>
            <person name="Nishikawa S."/>
            <person name="Nori F."/>
            <person name="Ohara O."/>
            <person name="Okazaki Y."/>
            <person name="Orlando V."/>
            <person name="Pang K.C."/>
            <person name="Pavan W.J."/>
            <person name="Pavesi G."/>
            <person name="Pesole G."/>
            <person name="Petrovsky N."/>
            <person name="Piazza S."/>
            <person name="Reed J."/>
            <person name="Reid J.F."/>
            <person name="Ring B.Z."/>
            <person name="Ringwald M."/>
            <person name="Rost B."/>
            <person name="Ruan Y."/>
            <person name="Salzberg S.L."/>
            <person name="Sandelin A."/>
            <person name="Schneider C."/>
            <person name="Schoenbach C."/>
            <person name="Sekiguchi K."/>
            <person name="Semple C.A."/>
            <person name="Seno S."/>
            <person name="Sessa L."/>
            <person name="Sheng Y."/>
            <person name="Shibata Y."/>
            <person name="Shimada H."/>
            <person name="Shimada K."/>
            <person name="Silva D."/>
            <person name="Sinclair B."/>
            <person name="Sperling S."/>
            <person name="Stupka E."/>
            <person name="Sugiura K."/>
            <person name="Sultana R."/>
            <person name="Takenaka Y."/>
            <person name="Taki K."/>
            <person name="Tammoja K."/>
            <person name="Tan S.L."/>
            <person name="Tang S."/>
            <person name="Taylor M.S."/>
            <person name="Tegner J."/>
            <person name="Teichmann S.A."/>
            <person name="Ueda H.R."/>
            <person name="van Nimwegen E."/>
            <person name="Verardo R."/>
            <person name="Wei C.L."/>
            <person name="Yagi K."/>
            <person name="Yamanishi H."/>
            <person name="Zabarovsky E."/>
            <person name="Zhu S."/>
            <person name="Zimmer A."/>
            <person name="Hide W."/>
            <person name="Bult C."/>
            <person name="Grimmond S.M."/>
            <person name="Teasdale R.D."/>
            <person name="Liu E.T."/>
            <person name="Brusic V."/>
            <person name="Quackenbush J."/>
            <person name="Wahlestedt C."/>
            <person name="Mattick J.S."/>
            <person name="Hume D.A."/>
            <person name="Kai C."/>
            <person name="Sasaki D."/>
            <person name="Tomaru Y."/>
            <person name="Fukuda S."/>
            <person name="Kanamori-Katayama M."/>
            <person name="Suzuki M."/>
            <person name="Aoki J."/>
            <person name="Arakawa T."/>
            <person name="Iida J."/>
            <person name="Imamura K."/>
            <person name="Itoh M."/>
            <person name="Kato T."/>
            <person name="Kawaji H."/>
            <person name="Kawagashira N."/>
            <person name="Kawashima T."/>
            <person name="Kojima M."/>
            <person name="Kondo S."/>
            <person name="Konno H."/>
            <person name="Nakano K."/>
            <person name="Ninomiya N."/>
            <person name="Nishio T."/>
            <person name="Okada M."/>
            <person name="Plessy C."/>
            <person name="Shibata K."/>
            <person name="Shiraki T."/>
            <person name="Suzuki S."/>
            <person name="Tagami M."/>
            <person name="Waki K."/>
            <person name="Watahiki A."/>
            <person name="Okamura-Oho Y."/>
            <person name="Suzuki H."/>
            <person name="Kawai J."/>
            <person name="Hayashizaki Y."/>
        </authorList>
    </citation>
    <scope>NUCLEOTIDE SEQUENCE [LARGE SCALE MRNA]</scope>
    <source>
        <strain>C57BL/6J</strain>
    </source>
</reference>
<reference key="2">
    <citation type="journal article" date="2009" name="PLoS Biol.">
        <title>Lineage-specific biology revealed by a finished genome assembly of the mouse.</title>
        <authorList>
            <person name="Church D.M."/>
            <person name="Goodstadt L."/>
            <person name="Hillier L.W."/>
            <person name="Zody M.C."/>
            <person name="Goldstein S."/>
            <person name="She X."/>
            <person name="Bult C.J."/>
            <person name="Agarwala R."/>
            <person name="Cherry J.L."/>
            <person name="DiCuccio M."/>
            <person name="Hlavina W."/>
            <person name="Kapustin Y."/>
            <person name="Meric P."/>
            <person name="Maglott D."/>
            <person name="Birtle Z."/>
            <person name="Marques A.C."/>
            <person name="Graves T."/>
            <person name="Zhou S."/>
            <person name="Teague B."/>
            <person name="Potamousis K."/>
            <person name="Churas C."/>
            <person name="Place M."/>
            <person name="Herschleb J."/>
            <person name="Runnheim R."/>
            <person name="Forrest D."/>
            <person name="Amos-Landgraf J."/>
            <person name="Schwartz D.C."/>
            <person name="Cheng Z."/>
            <person name="Lindblad-Toh K."/>
            <person name="Eichler E.E."/>
            <person name="Ponting C.P."/>
        </authorList>
    </citation>
    <scope>NUCLEOTIDE SEQUENCE [LARGE SCALE GENOMIC DNA]</scope>
    <source>
        <strain>C57BL/6J</strain>
    </source>
</reference>
<reference key="3">
    <citation type="submission" date="2005-07" db="EMBL/GenBank/DDBJ databases">
        <authorList>
            <person name="Mural R.J."/>
            <person name="Adams M.D."/>
            <person name="Myers E.W."/>
            <person name="Smith H.O."/>
            <person name="Venter J.C."/>
        </authorList>
    </citation>
    <scope>NUCLEOTIDE SEQUENCE [LARGE SCALE GENOMIC DNA]</scope>
</reference>
<reference key="4">
    <citation type="journal article" date="2004" name="Genome Res.">
        <title>The status, quality, and expansion of the NIH full-length cDNA project: the Mammalian Gene Collection (MGC).</title>
        <authorList>
            <consortium name="The MGC Project Team"/>
        </authorList>
    </citation>
    <scope>NUCLEOTIDE SEQUENCE [LARGE SCALE MRNA]</scope>
    <source>
        <strain>FVB/N</strain>
        <tissue>Mammary tumor</tissue>
    </source>
</reference>
<reference key="5">
    <citation type="submission" date="2005-02" db="EMBL/GenBank/DDBJ databases">
        <title>Prediction of the coding sequences of mouse homologues of KIAA gene. The complete nucleotide sequences of mouse KIAA-homologous cDNAs identified by screening of terminal sequences of cDNA clones randomly sampled from size-fractionated libraries.</title>
        <authorList>
            <person name="Okazaki N."/>
            <person name="Kikuno R.F."/>
            <person name="Ohara R."/>
            <person name="Inamoto S."/>
            <person name="Nagase T."/>
            <person name="Ohara O."/>
            <person name="Koga H."/>
        </authorList>
    </citation>
    <scope>NUCLEOTIDE SEQUENCE [LARGE SCALE MRNA] OF 8-504</scope>
    <source>
        <tissue>Brain</tissue>
    </source>
</reference>
<reference key="6">
    <citation type="journal article" date="2006" name="Circ. Res.">
        <title>Mapping the murine cardiac 26S proteasome complexes.</title>
        <authorList>
            <person name="Gomes A.V."/>
            <person name="Zong C."/>
            <person name="Edmondson R.D."/>
            <person name="Li X."/>
            <person name="Stefani E."/>
            <person name="Zhang J."/>
            <person name="Jones R.C."/>
            <person name="Thyparambil S."/>
            <person name="Wang G.W."/>
            <person name="Qiao X."/>
            <person name="Bardag-Gorce F."/>
            <person name="Ping P."/>
        </authorList>
    </citation>
    <scope>IDENTIFICATION IN THE 19S PROTEASOME REGULATORY COMPLEX</scope>
</reference>
<reference key="7">
    <citation type="journal article" date="2010" name="Cell">
        <title>A tissue-specific atlas of mouse protein phosphorylation and expression.</title>
        <authorList>
            <person name="Huttlin E.L."/>
            <person name="Jedrychowski M.P."/>
            <person name="Elias J.E."/>
            <person name="Goswami T."/>
            <person name="Rad R."/>
            <person name="Beausoleil S.A."/>
            <person name="Villen J."/>
            <person name="Haas W."/>
            <person name="Sowa M.E."/>
            <person name="Gygi S.P."/>
        </authorList>
    </citation>
    <scope>IDENTIFICATION BY MASS SPECTROMETRY [LARGE SCALE ANALYSIS]</scope>
    <source>
        <tissue>Brain</tissue>
        <tissue>Brown adipose tissue</tissue>
        <tissue>Heart</tissue>
        <tissue>Kidney</tissue>
        <tissue>Liver</tissue>
        <tissue>Lung</tissue>
        <tissue>Pancreas</tissue>
        <tissue>Spleen</tissue>
        <tissue>Testis</tissue>
    </source>
</reference>